<evidence type="ECO:0000255" key="1">
    <source>
        <dbReference type="HAMAP-Rule" id="MF_01325"/>
    </source>
</evidence>
<evidence type="ECO:0000305" key="2"/>
<comment type="function">
    <text evidence="1">One of the primary rRNA binding proteins, it binds directly near the 3'-end of the 23S rRNA, where it nucleates assembly of the 50S subunit.</text>
</comment>
<comment type="subunit">
    <text evidence="1">Part of the 50S ribosomal subunit. Forms a cluster with proteins L14 and L19.</text>
</comment>
<comment type="PTM">
    <text evidence="1">Methylated by PrmB.</text>
</comment>
<comment type="similarity">
    <text evidence="1">Belongs to the universal ribosomal protein uL3 family.</text>
</comment>
<protein>
    <recommendedName>
        <fullName evidence="1">Large ribosomal subunit protein uL3</fullName>
    </recommendedName>
    <alternativeName>
        <fullName evidence="2">50S ribosomal protein L3</fullName>
    </alternativeName>
</protein>
<gene>
    <name evidence="1" type="primary">rplC</name>
    <name type="ordered locus">APP7_1845</name>
</gene>
<dbReference type="EMBL" id="CP001091">
    <property type="protein sequence ID" value="ACE62497.1"/>
    <property type="molecule type" value="Genomic_DNA"/>
</dbReference>
<dbReference type="RefSeq" id="WP_005599280.1">
    <property type="nucleotide sequence ID" value="NC_010939.1"/>
</dbReference>
<dbReference type="SMR" id="B3GZ11"/>
<dbReference type="GeneID" id="48600052"/>
<dbReference type="KEGG" id="apa:APP7_1845"/>
<dbReference type="HOGENOM" id="CLU_044142_4_1_6"/>
<dbReference type="Proteomes" id="UP000001226">
    <property type="component" value="Chromosome"/>
</dbReference>
<dbReference type="GO" id="GO:0022625">
    <property type="term" value="C:cytosolic large ribosomal subunit"/>
    <property type="evidence" value="ECO:0007669"/>
    <property type="project" value="TreeGrafter"/>
</dbReference>
<dbReference type="GO" id="GO:0019843">
    <property type="term" value="F:rRNA binding"/>
    <property type="evidence" value="ECO:0007669"/>
    <property type="project" value="UniProtKB-UniRule"/>
</dbReference>
<dbReference type="GO" id="GO:0003735">
    <property type="term" value="F:structural constituent of ribosome"/>
    <property type="evidence" value="ECO:0007669"/>
    <property type="project" value="InterPro"/>
</dbReference>
<dbReference type="GO" id="GO:0006412">
    <property type="term" value="P:translation"/>
    <property type="evidence" value="ECO:0007669"/>
    <property type="project" value="UniProtKB-UniRule"/>
</dbReference>
<dbReference type="FunFam" id="2.40.30.10:FF:000004">
    <property type="entry name" value="50S ribosomal protein L3"/>
    <property type="match status" value="1"/>
</dbReference>
<dbReference type="FunFam" id="3.30.160.810:FF:000001">
    <property type="entry name" value="50S ribosomal protein L3"/>
    <property type="match status" value="1"/>
</dbReference>
<dbReference type="Gene3D" id="3.30.160.810">
    <property type="match status" value="1"/>
</dbReference>
<dbReference type="Gene3D" id="2.40.30.10">
    <property type="entry name" value="Translation factors"/>
    <property type="match status" value="1"/>
</dbReference>
<dbReference type="HAMAP" id="MF_01325_B">
    <property type="entry name" value="Ribosomal_uL3_B"/>
    <property type="match status" value="1"/>
</dbReference>
<dbReference type="InterPro" id="IPR000597">
    <property type="entry name" value="Ribosomal_uL3"/>
</dbReference>
<dbReference type="InterPro" id="IPR019927">
    <property type="entry name" value="Ribosomal_uL3_bac/org-type"/>
</dbReference>
<dbReference type="InterPro" id="IPR019926">
    <property type="entry name" value="Ribosomal_uL3_CS"/>
</dbReference>
<dbReference type="InterPro" id="IPR009000">
    <property type="entry name" value="Transl_B-barrel_sf"/>
</dbReference>
<dbReference type="NCBIfam" id="TIGR03625">
    <property type="entry name" value="L3_bact"/>
    <property type="match status" value="1"/>
</dbReference>
<dbReference type="PANTHER" id="PTHR11229">
    <property type="entry name" value="50S RIBOSOMAL PROTEIN L3"/>
    <property type="match status" value="1"/>
</dbReference>
<dbReference type="PANTHER" id="PTHR11229:SF16">
    <property type="entry name" value="LARGE RIBOSOMAL SUBUNIT PROTEIN UL3C"/>
    <property type="match status" value="1"/>
</dbReference>
<dbReference type="Pfam" id="PF00297">
    <property type="entry name" value="Ribosomal_L3"/>
    <property type="match status" value="1"/>
</dbReference>
<dbReference type="SUPFAM" id="SSF50447">
    <property type="entry name" value="Translation proteins"/>
    <property type="match status" value="1"/>
</dbReference>
<dbReference type="PROSITE" id="PS00474">
    <property type="entry name" value="RIBOSOMAL_L3"/>
    <property type="match status" value="1"/>
</dbReference>
<accession>B3GZ11</accession>
<name>RL3_ACTP7</name>
<sequence>MIGLVGRKVGMTRVFTEDGVSIPVTVIEIEANRVTQVKTLENDGYSAIQVTTGSKKANRVTKPEAGHFVKAGVEAGRGLWEFRTEGEEFTLGQEINVDIFTDVKKVDVTGTSKGKGFQGGVKRWNFRTQDATHGNSLSHRVLGSIGQNQTPGRVFKGKKMAGHLGAERVTVQSLEVVRVDAERKLLLVKGAVPGATNSDVIVKPAVKA</sequence>
<proteinExistence type="inferred from homology"/>
<reference key="1">
    <citation type="submission" date="2008-06" db="EMBL/GenBank/DDBJ databases">
        <title>Genome and proteome analysis of A. pleuropneumoniae serotype 7.</title>
        <authorList>
            <person name="Linke B."/>
            <person name="Buettner F."/>
            <person name="Martinez-Arias R."/>
            <person name="Goesmann A."/>
            <person name="Baltes N."/>
            <person name="Tegetmeyer H."/>
            <person name="Singh M."/>
            <person name="Gerlach G.F."/>
        </authorList>
    </citation>
    <scope>NUCLEOTIDE SEQUENCE [LARGE SCALE GENOMIC DNA]</scope>
    <source>
        <strain>AP76</strain>
    </source>
</reference>
<keyword id="KW-0488">Methylation</keyword>
<keyword id="KW-0687">Ribonucleoprotein</keyword>
<keyword id="KW-0689">Ribosomal protein</keyword>
<keyword id="KW-0694">RNA-binding</keyword>
<keyword id="KW-0699">rRNA-binding</keyword>
<feature type="chain" id="PRO_1000141814" description="Large ribosomal subunit protein uL3">
    <location>
        <begin position="1"/>
        <end position="208"/>
    </location>
</feature>
<feature type="modified residue" description="N5-methylglutamine" evidence="1">
    <location>
        <position position="149"/>
    </location>
</feature>
<organism>
    <name type="scientific">Actinobacillus pleuropneumoniae serotype 7 (strain AP76)</name>
    <dbReference type="NCBI Taxonomy" id="537457"/>
    <lineage>
        <taxon>Bacteria</taxon>
        <taxon>Pseudomonadati</taxon>
        <taxon>Pseudomonadota</taxon>
        <taxon>Gammaproteobacteria</taxon>
        <taxon>Pasteurellales</taxon>
        <taxon>Pasteurellaceae</taxon>
        <taxon>Actinobacillus</taxon>
    </lineage>
</organism>